<comment type="function">
    <text evidence="1 2">Reductase component of a two-component system involved in the biosynthesis of the enediyne antitumor antibiotic C-1027 (PubMed:18426211, PubMed:19817865). SgcE6 provides the FADH(2) required by both the halogenase SgcC3 and the monooxygenase SgcC through free diffusion (PubMed:18426211, PubMed:19817865). Accepts only NADH and FAD as substrates (PubMed:19817865).</text>
</comment>
<comment type="catalytic activity">
    <reaction evidence="2 6">
        <text>FADH2 + NAD(+) = FAD + NADH + 2 H(+)</text>
        <dbReference type="Rhea" id="RHEA:30147"/>
        <dbReference type="ChEBI" id="CHEBI:15378"/>
        <dbReference type="ChEBI" id="CHEBI:57540"/>
        <dbReference type="ChEBI" id="CHEBI:57692"/>
        <dbReference type="ChEBI" id="CHEBI:57945"/>
        <dbReference type="ChEBI" id="CHEBI:58307"/>
        <dbReference type="EC" id="1.5.1.37"/>
    </reaction>
    <physiologicalReaction direction="right-to-left" evidence="2 6">
        <dbReference type="Rhea" id="RHEA:30149"/>
    </physiologicalReaction>
</comment>
<comment type="activity regulation">
    <text evidence="1">The SgcE6-SgcC hydroxylation activity decreases in the presence of excess FAD.</text>
</comment>
<comment type="biophysicochemical properties">
    <kinetics>
        <KM evidence="2">53 uM for NADH</KM>
        <KM evidence="2">8.2 uM for FAD</KM>
        <text evidence="2">kcat is 3.1 sec(-1) with NADH as substrate. kcat is 4.5 sec(-1) with FAD as substrate.</text>
    </kinetics>
</comment>
<comment type="pathway">
    <text evidence="1">Antibiotic biosynthesis.</text>
</comment>
<comment type="subunit">
    <text evidence="3">Homodimer.</text>
</comment>
<comment type="similarity">
    <text evidence="5">Belongs to the non-flavoprotein flavin reductase family.</text>
</comment>
<keyword id="KW-0002">3D-structure</keyword>
<keyword id="KW-0045">Antibiotic biosynthesis</keyword>
<keyword id="KW-0274">FAD</keyword>
<keyword id="KW-0285">Flavoprotein</keyword>
<keyword id="KW-0520">NAD</keyword>
<keyword id="KW-0547">Nucleotide-binding</keyword>
<keyword id="KW-0560">Oxidoreductase</keyword>
<proteinExistence type="evidence at protein level"/>
<reference key="1">
    <citation type="journal article" date="2002" name="Science">
        <title>Biosynthesis of the enediyne antitumor antibiotic C-1027.</title>
        <authorList>
            <person name="Liu W."/>
            <person name="Christenson S.D."/>
            <person name="Standage S."/>
            <person name="Shen B."/>
        </authorList>
    </citation>
    <scope>NUCLEOTIDE SEQUENCE [GENOMIC DNA]</scope>
    <source>
        <strain>C-1027</strain>
    </source>
</reference>
<reference key="2">
    <citation type="journal article" date="2008" name="J. Am. Chem. Soc.">
        <title>Characterization of the two-component, FAD-dependent monooxygenase SgcC that requires carrier protein-tethered substrates for the biosynthesis of the enediyne antitumor antibiotic C-1027.</title>
        <authorList>
            <person name="Lin S."/>
            <person name="Van Lanen S.G."/>
            <person name="Shen B."/>
        </authorList>
    </citation>
    <scope>FUNCTION</scope>
    <scope>ACTIVITY REGULATION</scope>
    <scope>PATHWAY</scope>
</reference>
<reference key="3">
    <citation type="journal article" date="2009" name="FEMS Microbiol. Lett.">
        <title>Characterization of SgcE6, the flavin reductase component supporting FAD-dependent halogenation and hydroxylation in the biosynthesis of the enediyne antitumor antibiotic C-1027.</title>
        <authorList>
            <person name="Van Lanen S.G."/>
            <person name="Lin S."/>
            <person name="Horsman G.P."/>
            <person name="Shen B."/>
        </authorList>
    </citation>
    <scope>FUNCTION</scope>
    <scope>CATALYTIC ACTIVITY</scope>
    <scope>BIOPHYSICOCHEMICAL PROPERTIES</scope>
</reference>
<reference evidence="7 8" key="4">
    <citation type="journal article" date="2016" name="Biochemistry">
        <title>Crystal structures of SgcE6 and SgcC, the two-component monooxygenase that catalyzes hydroxylation of a carrier protein-tethered substrate during the biosynthesis of the enediyne antitumor antibiotic C-1027 in Streptomyces globisporus.</title>
        <authorList>
            <person name="Chang C.Y."/>
            <person name="Lohman J.R."/>
            <person name="Cao H."/>
            <person name="Tan K."/>
            <person name="Rudolf J.D."/>
            <person name="Ma M."/>
            <person name="Xu W."/>
            <person name="Bingman C.A."/>
            <person name="Yennamalli R.M."/>
            <person name="Bigelow L."/>
            <person name="Babnigg G."/>
            <person name="Yan X."/>
            <person name="Joachimiak A."/>
            <person name="Phillips G.N."/>
            <person name="Shen B."/>
        </authorList>
    </citation>
    <scope>X-RAY CRYSTALLOGRAPHY (1.66 ANGSTROMS) OF APOENZYME AND IN COMPLEX WITH FAD AND NAD</scope>
    <scope>SUBUNIT</scope>
</reference>
<gene>
    <name evidence="4" type="primary">sgcE6</name>
</gene>
<name>SGCE6_STRGL</name>
<protein>
    <recommendedName>
        <fullName evidence="5">NADH-dependent FAD reductase</fullName>
        <ecNumber evidence="2 6">1.5.1.37</ecNumber>
    </recommendedName>
    <alternativeName>
        <fullName evidence="5">Antibiotic C-1027 biosynthesis two-component monooxygenase system, reductase component</fullName>
    </alternativeName>
</protein>
<dbReference type="EC" id="1.5.1.37" evidence="2 6"/>
<dbReference type="EMBL" id="AY048670">
    <property type="protein sequence ID" value="AAL06698.1"/>
    <property type="molecule type" value="Genomic_DNA"/>
</dbReference>
<dbReference type="PDB" id="4HX6">
    <property type="method" value="X-ray"/>
    <property type="resolution" value="1.89 A"/>
    <property type="chains" value="A/B/C/D/E/F/G/H=1-182"/>
</dbReference>
<dbReference type="PDB" id="4R82">
    <property type="method" value="X-ray"/>
    <property type="resolution" value="1.66 A"/>
    <property type="chains" value="A/B=1-182"/>
</dbReference>
<dbReference type="PDBsum" id="4HX6"/>
<dbReference type="PDBsum" id="4R82"/>
<dbReference type="SMR" id="Q8GME2"/>
<dbReference type="GeneID" id="27787457"/>
<dbReference type="BRENDA" id="1.14.14.15">
    <property type="organism ID" value="5933"/>
</dbReference>
<dbReference type="BRENDA" id="1.5.1.37">
    <property type="organism ID" value="5933"/>
</dbReference>
<dbReference type="EvolutionaryTrace" id="Q8GME2"/>
<dbReference type="GO" id="GO:0010181">
    <property type="term" value="F:FMN binding"/>
    <property type="evidence" value="ECO:0007669"/>
    <property type="project" value="InterPro"/>
</dbReference>
<dbReference type="GO" id="GO:0042602">
    <property type="term" value="F:riboflavin reductase (NADPH) activity"/>
    <property type="evidence" value="ECO:0007669"/>
    <property type="project" value="TreeGrafter"/>
</dbReference>
<dbReference type="GO" id="GO:0017000">
    <property type="term" value="P:antibiotic biosynthetic process"/>
    <property type="evidence" value="ECO:0007669"/>
    <property type="project" value="UniProtKB-KW"/>
</dbReference>
<dbReference type="Gene3D" id="2.30.110.10">
    <property type="entry name" value="Electron Transport, Fmn-binding Protein, Chain A"/>
    <property type="match status" value="1"/>
</dbReference>
<dbReference type="InterPro" id="IPR002563">
    <property type="entry name" value="Flavin_Rdtase-like_dom"/>
</dbReference>
<dbReference type="InterPro" id="IPR050268">
    <property type="entry name" value="NADH-dep_flavin_reductase"/>
</dbReference>
<dbReference type="InterPro" id="IPR012349">
    <property type="entry name" value="Split_barrel_FMN-bd"/>
</dbReference>
<dbReference type="PANTHER" id="PTHR30466">
    <property type="entry name" value="FLAVIN REDUCTASE"/>
    <property type="match status" value="1"/>
</dbReference>
<dbReference type="PANTHER" id="PTHR30466:SF1">
    <property type="entry name" value="FMN REDUCTASE (NADH) RUTF"/>
    <property type="match status" value="1"/>
</dbReference>
<dbReference type="Pfam" id="PF01613">
    <property type="entry name" value="Flavin_Reduct"/>
    <property type="match status" value="1"/>
</dbReference>
<dbReference type="SMART" id="SM00903">
    <property type="entry name" value="Flavin_Reduct"/>
    <property type="match status" value="1"/>
</dbReference>
<dbReference type="SUPFAM" id="SSF50475">
    <property type="entry name" value="FMN-binding split barrel"/>
    <property type="match status" value="1"/>
</dbReference>
<evidence type="ECO:0000269" key="1">
    <source>
    </source>
</evidence>
<evidence type="ECO:0000269" key="2">
    <source>
    </source>
</evidence>
<evidence type="ECO:0000269" key="3">
    <source>
    </source>
</evidence>
<evidence type="ECO:0000303" key="4">
    <source>
    </source>
</evidence>
<evidence type="ECO:0000305" key="5"/>
<evidence type="ECO:0000305" key="6">
    <source>
    </source>
</evidence>
<evidence type="ECO:0007744" key="7">
    <source>
        <dbReference type="PDB" id="4HX6"/>
    </source>
</evidence>
<evidence type="ECO:0007744" key="8">
    <source>
        <dbReference type="PDB" id="4R82"/>
    </source>
</evidence>
<evidence type="ECO:0007829" key="9">
    <source>
        <dbReference type="PDB" id="4HX6"/>
    </source>
</evidence>
<evidence type="ECO:0007829" key="10">
    <source>
        <dbReference type="PDB" id="4R82"/>
    </source>
</evidence>
<organism>
    <name type="scientific">Streptomyces globisporus</name>
    <dbReference type="NCBI Taxonomy" id="1908"/>
    <lineage>
        <taxon>Bacteria</taxon>
        <taxon>Bacillati</taxon>
        <taxon>Actinomycetota</taxon>
        <taxon>Actinomycetes</taxon>
        <taxon>Kitasatosporales</taxon>
        <taxon>Streptomycetaceae</taxon>
        <taxon>Streptomyces</taxon>
    </lineage>
</organism>
<sequence>MSPIIAPPAELVDPKDRVQLRRVFGDFPTGVTVVTVGGSEPRGMTANSFTSVSLSPPLVLICVGKDAVMHQRLTALPTFAVSVLEAGQEKAARHFADHSRPPGVDQFDTVDWVLGEESGAPLIAGAVAHLECAIHRLYEGGDHTIFLGEVITATRWPAREGMLFSGGRFRRFAPDADEGRAA</sequence>
<accession>Q8GME2</accession>
<feature type="chain" id="PRO_0000454945" description="NADH-dependent FAD reductase">
    <location>
        <begin position="1"/>
        <end position="182"/>
    </location>
</feature>
<feature type="binding site" evidence="3 8">
    <location>
        <position position="16"/>
    </location>
    <ligand>
        <name>NAD(+)</name>
        <dbReference type="ChEBI" id="CHEBI:57540"/>
    </ligand>
</feature>
<feature type="binding site" evidence="3 8">
    <location>
        <begin position="47"/>
        <end position="48"/>
    </location>
    <ligand>
        <name>FAD</name>
        <dbReference type="ChEBI" id="CHEBI:57692"/>
    </ligand>
</feature>
<feature type="binding site" evidence="3 8">
    <location>
        <begin position="62"/>
        <end position="64"/>
    </location>
    <ligand>
        <name>FAD</name>
        <dbReference type="ChEBI" id="CHEBI:57692"/>
    </ligand>
</feature>
<feature type="binding site" evidence="3 8">
    <location>
        <position position="98"/>
    </location>
    <ligand>
        <name>FAD</name>
        <dbReference type="ChEBI" id="CHEBI:57692"/>
    </ligand>
</feature>
<feature type="binding site" evidence="3 8">
    <location>
        <position position="143"/>
    </location>
    <ligand>
        <name>NAD(+)</name>
        <dbReference type="ChEBI" id="CHEBI:57540"/>
    </ligand>
</feature>
<feature type="helix" evidence="9">
    <location>
        <begin position="2"/>
        <end position="5"/>
    </location>
</feature>
<feature type="strand" evidence="10">
    <location>
        <begin position="10"/>
        <end position="12"/>
    </location>
</feature>
<feature type="helix" evidence="10">
    <location>
        <begin position="17"/>
        <end position="24"/>
    </location>
</feature>
<feature type="strand" evidence="10">
    <location>
        <begin position="32"/>
        <end position="36"/>
    </location>
</feature>
<feature type="strand" evidence="10">
    <location>
        <begin position="38"/>
        <end position="40"/>
    </location>
</feature>
<feature type="strand" evidence="10">
    <location>
        <begin position="42"/>
        <end position="47"/>
    </location>
</feature>
<feature type="strand" evidence="10">
    <location>
        <begin position="50"/>
        <end position="53"/>
    </location>
</feature>
<feature type="turn" evidence="10">
    <location>
        <begin position="54"/>
        <end position="57"/>
    </location>
</feature>
<feature type="strand" evidence="10">
    <location>
        <begin position="58"/>
        <end position="64"/>
    </location>
</feature>
<feature type="helix" evidence="10">
    <location>
        <begin position="68"/>
        <end position="75"/>
    </location>
</feature>
<feature type="strand" evidence="10">
    <location>
        <begin position="77"/>
        <end position="83"/>
    </location>
</feature>
<feature type="helix" evidence="10">
    <location>
        <begin position="89"/>
        <end position="94"/>
    </location>
</feature>
<feature type="strand" evidence="10">
    <location>
        <begin position="108"/>
        <end position="110"/>
    </location>
</feature>
<feature type="strand" evidence="10">
    <location>
        <begin position="112"/>
        <end position="114"/>
    </location>
</feature>
<feature type="turn" evidence="10">
    <location>
        <begin position="116"/>
        <end position="118"/>
    </location>
</feature>
<feature type="strand" evidence="10">
    <location>
        <begin position="121"/>
        <end position="123"/>
    </location>
</feature>
<feature type="strand" evidence="10">
    <location>
        <begin position="127"/>
        <end position="140"/>
    </location>
</feature>
<feature type="strand" evidence="10">
    <location>
        <begin position="143"/>
        <end position="155"/>
    </location>
</feature>
<feature type="strand" evidence="10">
    <location>
        <begin position="163"/>
        <end position="165"/>
    </location>
</feature>
<feature type="strand" evidence="10">
    <location>
        <begin position="168"/>
        <end position="170"/>
    </location>
</feature>